<gene>
    <name evidence="4" type="primary">bar</name>
</gene>
<dbReference type="EC" id="2.3.1.183" evidence="3"/>
<dbReference type="EMBL" id="X17220">
    <property type="protein sequence ID" value="CAA35093.1"/>
    <property type="molecule type" value="Genomic_DNA"/>
</dbReference>
<dbReference type="EMBL" id="X05822">
    <property type="protein sequence ID" value="CAA29262.1"/>
    <property type="molecule type" value="Genomic_DNA"/>
</dbReference>
<dbReference type="PIR" id="S08615">
    <property type="entry name" value="S08615"/>
</dbReference>
<dbReference type="PDB" id="5T7D">
    <property type="method" value="X-ray"/>
    <property type="resolution" value="1.40 A"/>
    <property type="chains" value="A/B/C/D=1-183"/>
</dbReference>
<dbReference type="PDB" id="5T7E">
    <property type="method" value="X-ray"/>
    <property type="resolution" value="1.80 A"/>
    <property type="chains" value="A/B/C/D=1-183"/>
</dbReference>
<dbReference type="PDBsum" id="5T7D"/>
<dbReference type="PDBsum" id="5T7E"/>
<dbReference type="SMR" id="P16426"/>
<dbReference type="KEGG" id="ag:CAA35093"/>
<dbReference type="BRENDA" id="2.3.1.183">
    <property type="organism ID" value="6043"/>
</dbReference>
<dbReference type="SABIO-RK" id="P16426"/>
<dbReference type="GO" id="GO:0102971">
    <property type="term" value="F:phosphinothricin N-acetyltransferase activity"/>
    <property type="evidence" value="ECO:0007669"/>
    <property type="project" value="UniProtKB-EC"/>
</dbReference>
<dbReference type="GO" id="GO:0046677">
    <property type="term" value="P:response to antibiotic"/>
    <property type="evidence" value="ECO:0007669"/>
    <property type="project" value="UniProtKB-KW"/>
</dbReference>
<dbReference type="GO" id="GO:0009635">
    <property type="term" value="P:response to herbicide"/>
    <property type="evidence" value="ECO:0007669"/>
    <property type="project" value="UniProtKB-KW"/>
</dbReference>
<dbReference type="CDD" id="cd04301">
    <property type="entry name" value="NAT_SF"/>
    <property type="match status" value="1"/>
</dbReference>
<dbReference type="Gene3D" id="3.40.630.30">
    <property type="match status" value="1"/>
</dbReference>
<dbReference type="InterPro" id="IPR016181">
    <property type="entry name" value="Acyl_CoA_acyltransferase"/>
</dbReference>
<dbReference type="InterPro" id="IPR000182">
    <property type="entry name" value="GNAT_dom"/>
</dbReference>
<dbReference type="NCBIfam" id="NF040502">
    <property type="entry name" value="PPT_acetyltrans"/>
    <property type="match status" value="1"/>
</dbReference>
<dbReference type="PANTHER" id="PTHR43072">
    <property type="entry name" value="N-ACETYLTRANSFERASE"/>
    <property type="match status" value="1"/>
</dbReference>
<dbReference type="PANTHER" id="PTHR43072:SF23">
    <property type="entry name" value="UPF0039 PROTEIN C11D3.02C"/>
    <property type="match status" value="1"/>
</dbReference>
<dbReference type="Pfam" id="PF00583">
    <property type="entry name" value="Acetyltransf_1"/>
    <property type="match status" value="1"/>
</dbReference>
<dbReference type="SUPFAM" id="SSF55729">
    <property type="entry name" value="Acyl-CoA N-acyltransferases (Nat)"/>
    <property type="match status" value="1"/>
</dbReference>
<dbReference type="PROSITE" id="PS51186">
    <property type="entry name" value="GNAT"/>
    <property type="match status" value="1"/>
</dbReference>
<evidence type="ECO:0000250" key="1">
    <source>
        <dbReference type="UniProtKB" id="Q8ZPD3"/>
    </source>
</evidence>
<evidence type="ECO:0000255" key="2">
    <source>
        <dbReference type="PROSITE-ProRule" id="PRU00532"/>
    </source>
</evidence>
<evidence type="ECO:0000269" key="3">
    <source>
    </source>
</evidence>
<evidence type="ECO:0000303" key="4">
    <source>
    </source>
</evidence>
<evidence type="ECO:0000305" key="5"/>
<evidence type="ECO:0007829" key="6">
    <source>
        <dbReference type="PDB" id="5T7D"/>
    </source>
</evidence>
<feature type="chain" id="PRO_0000074574" description="Phosphinothricin N-acetyltransferase">
    <location>
        <begin position="1"/>
        <end position="183"/>
    </location>
</feature>
<feature type="domain" description="N-acetyltransferase" evidence="2">
    <location>
        <begin position="8"/>
        <end position="173"/>
    </location>
</feature>
<feature type="binding site" evidence="1">
    <location>
        <begin position="91"/>
        <end position="93"/>
    </location>
    <ligand>
        <name>acetyl-CoA</name>
        <dbReference type="ChEBI" id="CHEBI:57288"/>
    </ligand>
</feature>
<feature type="binding site" evidence="1">
    <location>
        <begin position="99"/>
        <end position="104"/>
    </location>
    <ligand>
        <name>acetyl-CoA</name>
        <dbReference type="ChEBI" id="CHEBI:57288"/>
    </ligand>
</feature>
<feature type="binding site" evidence="1">
    <location>
        <position position="130"/>
    </location>
    <ligand>
        <name>acetyl-CoA</name>
        <dbReference type="ChEBI" id="CHEBI:57288"/>
    </ligand>
</feature>
<feature type="strand" evidence="6">
    <location>
        <begin position="9"/>
        <end position="12"/>
    </location>
</feature>
<feature type="helix" evidence="6">
    <location>
        <begin position="15"/>
        <end position="17"/>
    </location>
</feature>
<feature type="helix" evidence="6">
    <location>
        <begin position="18"/>
        <end position="31"/>
    </location>
</feature>
<feature type="strand" evidence="6">
    <location>
        <begin position="33"/>
        <end position="35"/>
    </location>
</feature>
<feature type="helix" evidence="6">
    <location>
        <begin position="43"/>
        <end position="53"/>
    </location>
</feature>
<feature type="turn" evidence="6">
    <location>
        <begin position="54"/>
        <end position="56"/>
    </location>
</feature>
<feature type="strand" evidence="6">
    <location>
        <begin position="59"/>
        <end position="64"/>
    </location>
</feature>
<feature type="strand" evidence="6">
    <location>
        <begin position="67"/>
        <end position="80"/>
    </location>
</feature>
<feature type="helix" evidence="6">
    <location>
        <begin position="81"/>
        <end position="83"/>
    </location>
</feature>
<feature type="strand" evidence="6">
    <location>
        <begin position="86"/>
        <end position="93"/>
    </location>
</feature>
<feature type="helix" evidence="6">
    <location>
        <begin position="95"/>
        <end position="97"/>
    </location>
</feature>
<feature type="helix" evidence="6">
    <location>
        <begin position="102"/>
        <end position="117"/>
    </location>
</feature>
<feature type="strand" evidence="6">
    <location>
        <begin position="120"/>
        <end position="129"/>
    </location>
</feature>
<feature type="helix" evidence="6">
    <location>
        <begin position="131"/>
        <end position="139"/>
    </location>
</feature>
<feature type="strand" evidence="6">
    <location>
        <begin position="143"/>
        <end position="154"/>
    </location>
</feature>
<feature type="strand" evidence="6">
    <location>
        <begin position="157"/>
        <end position="167"/>
    </location>
</feature>
<keyword id="KW-0002">3D-structure</keyword>
<keyword id="KW-0012">Acyltransferase</keyword>
<keyword id="KW-0046">Antibiotic resistance</keyword>
<keyword id="KW-0903">Direct protein sequencing</keyword>
<keyword id="KW-0308">Genetically modified food</keyword>
<keyword id="KW-0359">Herbicide resistance</keyword>
<keyword id="KW-0808">Transferase</keyword>
<sequence>MSPERRPADIRRATEADMPAVCTIVNHYIETSTVNFRTEPQEPQEWTDDLVRLRERYPWLVAEVDGEVAGIAYAGPWKARNAYDWTAESTVYVSPRHQRTGLGSTLYTHLLKSLEAQGFKSVVAVIGLPNDPSVRMHEALGYAPRGMLRAAGFKHGNWHDVGFWQLDFSLPVPPRPVLPVTEI</sequence>
<accession>P16426</accession>
<accession>P72461</accession>
<name>PAT_STRHY</name>
<proteinExistence type="evidence at protein level"/>
<organism>
    <name type="scientific">Streptomyces hygroscopicus</name>
    <dbReference type="NCBI Taxonomy" id="1912"/>
    <lineage>
        <taxon>Bacteria</taxon>
        <taxon>Bacillati</taxon>
        <taxon>Actinomycetota</taxon>
        <taxon>Actinomycetes</taxon>
        <taxon>Kitasatosporales</taxon>
        <taxon>Streptomycetaceae</taxon>
        <taxon>Streptomyces</taxon>
        <taxon>Streptomyces violaceusniger group</taxon>
    </lineage>
</organism>
<protein>
    <recommendedName>
        <fullName evidence="4">Phosphinothricin N-acetyltransferase</fullName>
        <shortName evidence="4">PPT N-acetyltransferase</shortName>
        <ecNumber evidence="3">2.3.1.183</ecNumber>
    </recommendedName>
    <alternativeName>
        <fullName evidence="5">Phosphinothricin-resistance protein</fullName>
    </alternativeName>
</protein>
<reference key="1">
    <citation type="journal article" date="1990" name="Nucleic Acids Res.">
        <title>A cassette containing the bar gene of Streptomyces hygroscopicus: a selectable marker for plant transformation.</title>
        <authorList>
            <person name="White J."/>
            <person name="Chang S.-Y.P."/>
            <person name="Bibb M.J."/>
            <person name="Bibb M.J."/>
        </authorList>
    </citation>
    <scope>NUCLEOTIDE SEQUENCE [GENOMIC DNA]</scope>
    <source>
        <strain>ATCC 21705 / DSM 41527 / SF-1293</strain>
    </source>
</reference>
<reference key="2">
    <citation type="journal article" date="1987" name="EMBO J.">
        <title>Characterization of the herbicide-resistance gene bar from Streptomyces hygroscopicus.</title>
        <authorList>
            <person name="Thompson C.J."/>
            <person name="Movva N.R."/>
            <person name="Tizard R."/>
            <person name="Crameri R."/>
            <person name="Davies J.E."/>
            <person name="Lauwereys M."/>
            <person name="Botterman J."/>
        </authorList>
    </citation>
    <scope>NUCLEOTIDE SEQUENCE [GENOMIC DNA]</scope>
    <scope>PROTEIN SEQUENCE OF 3-12</scope>
    <scope>FUNCTION</scope>
    <scope>CATALYTIC ACTIVITY</scope>
    <scope>BIOPHYSICOCHEMICAL PROPERTIES</scope>
</reference>
<comment type="function">
    <text evidence="3">Inactivates phosphinothricin (PPT) by transfer of an acetyl group from acetyl CoA. Can also acetylate demethylphosphinothricin but not PTT or glutamate. This enzyme is an effector of phosphinothricin tripeptide (PTT or bialaphos) resistance.</text>
</comment>
<comment type="catalytic activity">
    <reaction evidence="3">
        <text>phosphinothricin + acetyl-CoA = N-acetylphosphinothricin + CoA + H(+)</text>
        <dbReference type="Rhea" id="RHEA:12597"/>
        <dbReference type="ChEBI" id="CHEBI:15378"/>
        <dbReference type="ChEBI" id="CHEBI:57287"/>
        <dbReference type="ChEBI" id="CHEBI:57288"/>
        <dbReference type="ChEBI" id="CHEBI:58879"/>
        <dbReference type="ChEBI" id="CHEBI:58882"/>
        <dbReference type="EC" id="2.3.1.183"/>
    </reaction>
</comment>
<comment type="biophysicochemical properties">
    <kinetics>
        <KM evidence="3">0.06 mM for phosphinothricin</KM>
        <KM evidence="3">2 mM for demethylphosphinothricin</KM>
        <KM evidence="3">36 mM for methionine sulfoximine</KM>
        <KM evidence="3">56 mM for hydroxylysine</KM>
        <KM evidence="3">240 mM for glutamate</KM>
    </kinetics>
</comment>
<comment type="biotechnology">
    <text>Introduced by genetic manipulation and expressed in glufosinate-tolerant maize by Dekalb Genetics.</text>
</comment>
<comment type="similarity">
    <text evidence="5">Belongs to the acetyltransferase family. PAT/BAR subfamily.</text>
</comment>